<comment type="function">
    <text evidence="1">Channel that opens in response to stretch forces in the membrane lipid bilayer. May participate in the regulation of osmotic pressure changes within the cell.</text>
</comment>
<comment type="subunit">
    <text evidence="1">Homopentamer.</text>
</comment>
<comment type="subcellular location">
    <subcellularLocation>
        <location evidence="1">Cell inner membrane</location>
        <topology evidence="1">Multi-pass membrane protein</topology>
    </subcellularLocation>
</comment>
<comment type="similarity">
    <text evidence="1">Belongs to the MscL family.</text>
</comment>
<gene>
    <name evidence="1" type="primary">mscL</name>
    <name type="ordered locus">SSPA3056</name>
</gene>
<reference key="1">
    <citation type="journal article" date="2009" name="BMC Genomics">
        <title>Pseudogene accumulation in the evolutionary histories of Salmonella enterica serovars Paratyphi A and Typhi.</title>
        <authorList>
            <person name="Holt K.E."/>
            <person name="Thomson N.R."/>
            <person name="Wain J."/>
            <person name="Langridge G.C."/>
            <person name="Hasan R."/>
            <person name="Bhutta Z.A."/>
            <person name="Quail M.A."/>
            <person name="Norbertczak H."/>
            <person name="Walker D."/>
            <person name="Simmonds M."/>
            <person name="White B."/>
            <person name="Bason N."/>
            <person name="Mungall K."/>
            <person name="Dougan G."/>
            <person name="Parkhill J."/>
        </authorList>
    </citation>
    <scope>NUCLEOTIDE SEQUENCE [LARGE SCALE GENOMIC DNA]</scope>
    <source>
        <strain>AKU_12601</strain>
    </source>
</reference>
<organism>
    <name type="scientific">Salmonella paratyphi A (strain AKU_12601)</name>
    <dbReference type="NCBI Taxonomy" id="554290"/>
    <lineage>
        <taxon>Bacteria</taxon>
        <taxon>Pseudomonadati</taxon>
        <taxon>Pseudomonadota</taxon>
        <taxon>Gammaproteobacteria</taxon>
        <taxon>Enterobacterales</taxon>
        <taxon>Enterobacteriaceae</taxon>
        <taxon>Salmonella</taxon>
    </lineage>
</organism>
<feature type="chain" id="PRO_1000094925" description="Large-conductance mechanosensitive channel">
    <location>
        <begin position="1"/>
        <end position="137"/>
    </location>
</feature>
<feature type="transmembrane region" description="Helical" evidence="1">
    <location>
        <begin position="10"/>
        <end position="30"/>
    </location>
</feature>
<feature type="transmembrane region" description="Helical" evidence="1">
    <location>
        <begin position="76"/>
        <end position="96"/>
    </location>
</feature>
<sequence length="137" mass="15074">MSFIKEFREFAMRGNVVDLAVGVIIGAAFGKIVSSLVADIIMPPLGLLIGGIDFKQFAFTLREAQGDIPAVVMHYGVFIQNVFDFVIVAFAIFVAIKLINRLNRKKAEEPAAPPAPSKEEVLLGEIRDLLKEQNNRS</sequence>
<name>MSCL_SALPK</name>
<accession>B5BGV7</accession>
<dbReference type="EMBL" id="FM200053">
    <property type="protein sequence ID" value="CAR61307.1"/>
    <property type="molecule type" value="Genomic_DNA"/>
</dbReference>
<dbReference type="RefSeq" id="WP_000008119.1">
    <property type="nucleotide sequence ID" value="NC_011147.1"/>
</dbReference>
<dbReference type="SMR" id="B5BGV7"/>
<dbReference type="KEGG" id="sek:SSPA3056"/>
<dbReference type="HOGENOM" id="CLU_095787_0_0_6"/>
<dbReference type="Proteomes" id="UP000001869">
    <property type="component" value="Chromosome"/>
</dbReference>
<dbReference type="GO" id="GO:0005886">
    <property type="term" value="C:plasma membrane"/>
    <property type="evidence" value="ECO:0007669"/>
    <property type="project" value="UniProtKB-SubCell"/>
</dbReference>
<dbReference type="GO" id="GO:0008381">
    <property type="term" value="F:mechanosensitive monoatomic ion channel activity"/>
    <property type="evidence" value="ECO:0007669"/>
    <property type="project" value="UniProtKB-UniRule"/>
</dbReference>
<dbReference type="FunFam" id="1.10.1200.120:FF:000001">
    <property type="entry name" value="Large-conductance mechanosensitive channel"/>
    <property type="match status" value="1"/>
</dbReference>
<dbReference type="Gene3D" id="1.10.1200.120">
    <property type="entry name" value="Large-conductance mechanosensitive channel, MscL, domain 1"/>
    <property type="match status" value="1"/>
</dbReference>
<dbReference type="HAMAP" id="MF_00115">
    <property type="entry name" value="MscL"/>
    <property type="match status" value="1"/>
</dbReference>
<dbReference type="InterPro" id="IPR019823">
    <property type="entry name" value="Mechanosensitive_channel_CS"/>
</dbReference>
<dbReference type="InterPro" id="IPR001185">
    <property type="entry name" value="MS_channel"/>
</dbReference>
<dbReference type="InterPro" id="IPR037673">
    <property type="entry name" value="MSC/AndL"/>
</dbReference>
<dbReference type="InterPro" id="IPR036019">
    <property type="entry name" value="MscL_channel"/>
</dbReference>
<dbReference type="NCBIfam" id="TIGR00220">
    <property type="entry name" value="mscL"/>
    <property type="match status" value="1"/>
</dbReference>
<dbReference type="NCBIfam" id="NF001841">
    <property type="entry name" value="PRK00567.1-1"/>
    <property type="match status" value="1"/>
</dbReference>
<dbReference type="NCBIfam" id="NF001843">
    <property type="entry name" value="PRK00567.1-4"/>
    <property type="match status" value="1"/>
</dbReference>
<dbReference type="PANTHER" id="PTHR30266:SF2">
    <property type="entry name" value="LARGE-CONDUCTANCE MECHANOSENSITIVE CHANNEL"/>
    <property type="match status" value="1"/>
</dbReference>
<dbReference type="PANTHER" id="PTHR30266">
    <property type="entry name" value="MECHANOSENSITIVE CHANNEL MSCL"/>
    <property type="match status" value="1"/>
</dbReference>
<dbReference type="Pfam" id="PF01741">
    <property type="entry name" value="MscL"/>
    <property type="match status" value="1"/>
</dbReference>
<dbReference type="PRINTS" id="PR01264">
    <property type="entry name" value="MECHCHANNEL"/>
</dbReference>
<dbReference type="SUPFAM" id="SSF81330">
    <property type="entry name" value="Gated mechanosensitive channel"/>
    <property type="match status" value="1"/>
</dbReference>
<dbReference type="PROSITE" id="PS01327">
    <property type="entry name" value="MSCL"/>
    <property type="match status" value="1"/>
</dbReference>
<keyword id="KW-0997">Cell inner membrane</keyword>
<keyword id="KW-1003">Cell membrane</keyword>
<keyword id="KW-0407">Ion channel</keyword>
<keyword id="KW-0406">Ion transport</keyword>
<keyword id="KW-0472">Membrane</keyword>
<keyword id="KW-0812">Transmembrane</keyword>
<keyword id="KW-1133">Transmembrane helix</keyword>
<keyword id="KW-0813">Transport</keyword>
<evidence type="ECO:0000255" key="1">
    <source>
        <dbReference type="HAMAP-Rule" id="MF_00115"/>
    </source>
</evidence>
<protein>
    <recommendedName>
        <fullName evidence="1">Large-conductance mechanosensitive channel</fullName>
    </recommendedName>
</protein>
<proteinExistence type="inferred from homology"/>